<feature type="initiator methionine" description="Removed" evidence="1">
    <location>
        <position position="1"/>
    </location>
</feature>
<feature type="chain" id="PRO_0000023259" description="Poly [ADP-ribose] polymerase 1">
    <location>
        <begin position="2"/>
        <end position="1013"/>
    </location>
</feature>
<feature type="chain" id="PRO_0000456363" description="Poly [ADP-ribose] polymerase 1, processed N-terminus" evidence="1">
    <location>
        <begin position="2"/>
        <end position="214"/>
    </location>
</feature>
<feature type="chain" id="PRO_0000456364" description="Poly [ADP-ribose] polymerase 1, processed C-terminus" evidence="1">
    <location>
        <begin position="215"/>
        <end position="1013"/>
    </location>
</feature>
<feature type="domain" description="PADR1 zinc-binding" evidence="10">
    <location>
        <begin position="225"/>
        <end position="359"/>
    </location>
</feature>
<feature type="domain" description="BRCT" evidence="5">
    <location>
        <begin position="385"/>
        <end position="476"/>
    </location>
</feature>
<feature type="domain" description="WGR" evidence="9">
    <location>
        <begin position="541"/>
        <end position="637"/>
    </location>
</feature>
<feature type="domain" description="PARP alpha-helical" evidence="8">
    <location>
        <begin position="661"/>
        <end position="778"/>
    </location>
</feature>
<feature type="domain" description="PARP catalytic" evidence="7">
    <location>
        <begin position="787"/>
        <end position="1013"/>
    </location>
</feature>
<feature type="zinc finger region" description="PARP-type 1" evidence="6">
    <location>
        <begin position="9"/>
        <end position="93"/>
    </location>
</feature>
<feature type="zinc finger region" description="PARP-type 2" evidence="6">
    <location>
        <begin position="113"/>
        <end position="203"/>
    </location>
</feature>
<feature type="region of interest" description="Disordered" evidence="11">
    <location>
        <begin position="200"/>
        <end position="226"/>
    </location>
</feature>
<feature type="region of interest" description="Zinc ribbon" evidence="10">
    <location>
        <begin position="290"/>
        <end position="332"/>
    </location>
</feature>
<feature type="region of interest" description="Automodification domain" evidence="1">
    <location>
        <begin position="373"/>
        <end position="523"/>
    </location>
</feature>
<feature type="region of interest" description="Disordered" evidence="11">
    <location>
        <begin position="489"/>
        <end position="508"/>
    </location>
</feature>
<feature type="short sequence motif" description="Nuclear localization signal" evidence="1">
    <location>
        <begin position="207"/>
        <end position="209"/>
    </location>
</feature>
<feature type="short sequence motif" description="Nuclear localization signal" evidence="1">
    <location>
        <begin position="221"/>
        <end position="226"/>
    </location>
</feature>
<feature type="compositionally biased region" description="Basic and acidic residues" evidence="11">
    <location>
        <begin position="204"/>
        <end position="226"/>
    </location>
</feature>
<feature type="compositionally biased region" description="Low complexity" evidence="11">
    <location>
        <begin position="494"/>
        <end position="503"/>
    </location>
</feature>
<feature type="active site" description="For poly [ADP-ribose] polymerase activity" evidence="1">
    <location>
        <position position="987"/>
    </location>
</feature>
<feature type="binding site" evidence="6">
    <location>
        <position position="21"/>
    </location>
    <ligand>
        <name>Zn(2+)</name>
        <dbReference type="ChEBI" id="CHEBI:29105"/>
        <label>1</label>
    </ligand>
</feature>
<feature type="binding site" evidence="6">
    <location>
        <position position="24"/>
    </location>
    <ligand>
        <name>Zn(2+)</name>
        <dbReference type="ChEBI" id="CHEBI:29105"/>
        <label>1</label>
    </ligand>
</feature>
<feature type="binding site" evidence="6">
    <location>
        <position position="53"/>
    </location>
    <ligand>
        <name>Zn(2+)</name>
        <dbReference type="ChEBI" id="CHEBI:29105"/>
        <label>1</label>
    </ligand>
</feature>
<feature type="binding site" evidence="6">
    <location>
        <position position="56"/>
    </location>
    <ligand>
        <name>Zn(2+)</name>
        <dbReference type="ChEBI" id="CHEBI:29105"/>
        <label>1</label>
    </ligand>
</feature>
<feature type="binding site" evidence="6">
    <location>
        <position position="125"/>
    </location>
    <ligand>
        <name>Zn(2+)</name>
        <dbReference type="ChEBI" id="CHEBI:29105"/>
        <label>2</label>
    </ligand>
</feature>
<feature type="binding site" evidence="6">
    <location>
        <position position="128"/>
    </location>
    <ligand>
        <name>Zn(2+)</name>
        <dbReference type="ChEBI" id="CHEBI:29105"/>
        <label>2</label>
    </ligand>
</feature>
<feature type="binding site" evidence="6">
    <location>
        <position position="159"/>
    </location>
    <ligand>
        <name>Zn(2+)</name>
        <dbReference type="ChEBI" id="CHEBI:29105"/>
        <label>2</label>
    </ligand>
</feature>
<feature type="binding site" evidence="6">
    <location>
        <position position="162"/>
    </location>
    <ligand>
        <name>Zn(2+)</name>
        <dbReference type="ChEBI" id="CHEBI:29105"/>
        <label>2</label>
    </ligand>
</feature>
<feature type="binding site" evidence="10">
    <location>
        <position position="295"/>
    </location>
    <ligand>
        <name>Zn(2+)</name>
        <dbReference type="ChEBI" id="CHEBI:29105"/>
        <label>3</label>
    </ligand>
</feature>
<feature type="binding site" evidence="10">
    <location>
        <position position="298"/>
    </location>
    <ligand>
        <name>Zn(2+)</name>
        <dbReference type="ChEBI" id="CHEBI:29105"/>
        <label>3</label>
    </ligand>
</feature>
<feature type="binding site" evidence="10">
    <location>
        <position position="311"/>
    </location>
    <ligand>
        <name>Zn(2+)</name>
        <dbReference type="ChEBI" id="CHEBI:29105"/>
        <label>3</label>
    </ligand>
</feature>
<feature type="binding site" evidence="10">
    <location>
        <position position="321"/>
    </location>
    <ligand>
        <name>Zn(2+)</name>
        <dbReference type="ChEBI" id="CHEBI:29105"/>
        <label>3</label>
    </ligand>
</feature>
<feature type="binding site" evidence="3">
    <location>
        <begin position="861"/>
        <end position="863"/>
    </location>
    <ligand>
        <name>NAD(+)</name>
        <dbReference type="ChEBI" id="CHEBI:57540"/>
    </ligand>
</feature>
<feature type="binding site" evidence="3">
    <location>
        <position position="870"/>
    </location>
    <ligand>
        <name>NAD(+)</name>
        <dbReference type="ChEBI" id="CHEBI:57540"/>
    </ligand>
</feature>
<feature type="binding site" evidence="3">
    <location>
        <position position="877"/>
    </location>
    <ligand>
        <name>NAD(+)</name>
        <dbReference type="ChEBI" id="CHEBI:57540"/>
    </ligand>
</feature>
<feature type="binding site" evidence="3">
    <location>
        <position position="903"/>
    </location>
    <ligand>
        <name>NAD(+)</name>
        <dbReference type="ChEBI" id="CHEBI:57540"/>
    </ligand>
</feature>
<feature type="site" description="Cleavage; by caspase-3 and caspase-7" evidence="23">
    <location>
        <begin position="214"/>
        <end position="215"/>
    </location>
</feature>
<feature type="modified residue" description="N-acetylalanine" evidence="1">
    <location>
        <position position="2"/>
    </location>
</feature>
<feature type="modified residue" description="Phosphoserine" evidence="1">
    <location>
        <position position="41"/>
    </location>
</feature>
<feature type="modified residue" description="N6-acetyllysine" evidence="34">
    <location>
        <position position="97"/>
    </location>
</feature>
<feature type="modified residue" description="N6-acetyllysine" evidence="1">
    <location>
        <position position="105"/>
    </location>
</feature>
<feature type="modified residue" description="N6-acetyllysine" evidence="1">
    <location>
        <position position="131"/>
    </location>
</feature>
<feature type="modified residue" description="Phosphoserine" evidence="1">
    <location>
        <position position="177"/>
    </location>
</feature>
<feature type="modified residue" description="Phosphoserine" evidence="1">
    <location>
        <position position="179"/>
    </location>
</feature>
<feature type="modified residue" description="Phosphoserine" evidence="1">
    <location>
        <position position="185"/>
    </location>
</feature>
<feature type="modified residue" description="Phosphoserine" evidence="1">
    <location>
        <position position="274"/>
    </location>
</feature>
<feature type="modified residue" description="Phosphoserine" evidence="1">
    <location>
        <position position="277"/>
    </location>
</feature>
<feature type="modified residue" description="PolyADP-ribosyl aspartic acid" evidence="1">
    <location>
        <position position="387"/>
    </location>
</feature>
<feature type="modified residue" description="PolyADP-ribosyl glutamic acid" evidence="4">
    <location>
        <position position="407"/>
    </location>
</feature>
<feature type="modified residue" description="PolyADP-ribosyl glutamic acid" evidence="4">
    <location>
        <position position="413"/>
    </location>
</feature>
<feature type="modified residue" description="PolyADP-ribosyl glutamic acid" evidence="4">
    <location>
        <position position="435"/>
    </location>
</feature>
<feature type="modified residue" description="PolyADP-ribosyl glutamic acid" evidence="4">
    <location>
        <position position="437"/>
    </location>
</feature>
<feature type="modified residue" description="PolyADP-ribosyl glutamic acid" evidence="4">
    <location>
        <position position="444"/>
    </location>
</feature>
<feature type="modified residue" description="PolyADP-ribosyl glutamic acid" evidence="4">
    <location>
        <position position="445"/>
    </location>
</feature>
<feature type="modified residue" description="PolyADP-ribosyl glutamic acid" evidence="4">
    <location>
        <position position="448"/>
    </location>
</feature>
<feature type="modified residue" description="PolyADP-ribosyl glutamic acid" evidence="4">
    <location>
        <position position="456"/>
    </location>
</feature>
<feature type="modified residue" description="PolyADP-ribosyl glutamic acid" evidence="4">
    <location>
        <position position="484"/>
    </location>
</feature>
<feature type="modified residue" description="PolyADP-ribosyl glutamic acid" evidence="1">
    <location>
        <position position="488"/>
    </location>
</feature>
<feature type="modified residue" description="PolyADP-ribosyl glutamic acid" evidence="1">
    <location>
        <position position="491"/>
    </location>
</feature>
<feature type="modified residue" description="ADP-ribosylserine" evidence="1">
    <location>
        <position position="499"/>
    </location>
</feature>
<feature type="modified residue" description="ADP-ribosylserine" evidence="1">
    <location>
        <position position="503"/>
    </location>
</feature>
<feature type="modified residue" description="ADP-ribosylserine" evidence="1">
    <location>
        <position position="506"/>
    </location>
</feature>
<feature type="modified residue" description="PolyADP-ribosyl glutamic acid" evidence="4">
    <location>
        <position position="512"/>
    </location>
</feature>
<feature type="modified residue" description="PolyADP-ribosyl glutamic acid" evidence="4">
    <location>
        <position position="513"/>
    </location>
</feature>
<feature type="modified residue" description="ADP-ribosylserine" evidence="1">
    <location>
        <position position="518"/>
    </location>
</feature>
<feature type="modified residue" description="PolyADP-ribosyl glutamic acid" evidence="4">
    <location>
        <position position="519"/>
    </location>
</feature>
<feature type="modified residue" description="N6-(ADP-ribosyl)lysine" evidence="22">
    <location>
        <position position="520"/>
    </location>
</feature>
<feature type="modified residue" description="Phosphothreonine" evidence="1">
    <location>
        <position position="593"/>
    </location>
</feature>
<feature type="modified residue" description="N6-acetyllysine" evidence="1">
    <location>
        <position position="599"/>
    </location>
</feature>
<feature type="modified residue" description="N6-acetyllysine" evidence="1">
    <location>
        <position position="620"/>
    </location>
</feature>
<feature type="modified residue" description="Phosphoserine" evidence="1">
    <location>
        <position position="781"/>
    </location>
</feature>
<feature type="modified residue" description="Phosphoserine" evidence="1">
    <location>
        <position position="785"/>
    </location>
</feature>
<feature type="cross-link" description="Glycyl lysine isopeptide (Lys-Gly) (interchain with G-Cter in SUMO2)" evidence="1">
    <location>
        <position position="192"/>
    </location>
</feature>
<feature type="cross-link" description="Glycyl lysine isopeptide (Lys-Gly) (interchain with G-Cter in SUMO1); alternate" evidence="1">
    <location>
        <position position="203"/>
    </location>
</feature>
<feature type="cross-link" description="Glycyl lysine isopeptide (Lys-Gly) (interchain with G-Cter in SUMO2); alternate" evidence="1">
    <location>
        <position position="203"/>
    </location>
</feature>
<feature type="cross-link" description="Glycyl lysine isopeptide (Lys-Gly) (interchain with G-Cter in SUMO2)" evidence="1">
    <location>
        <position position="249"/>
    </location>
</feature>
<feature type="cross-link" description="Glycyl lysine isopeptide (Lys-Gly) (interchain with G-Cter in SUMO2)" evidence="1">
    <location>
        <position position="467"/>
    </location>
</feature>
<feature type="cross-link" description="Glycyl lysine isopeptide (Lys-Gly) (interchain with G-Cter in SUMO1); alternate" evidence="1">
    <location>
        <position position="486"/>
    </location>
</feature>
<feature type="cross-link" description="Glycyl lysine isopeptide (Lys-Gly) (interchain with G-Cter in SUMO2); alternate" evidence="1">
    <location>
        <position position="486"/>
    </location>
</feature>
<feature type="cross-link" description="Glycyl lysine isopeptide (Lys-Gly) (interchain with G-Cter in SUMO2)" evidence="1">
    <location>
        <position position="511"/>
    </location>
</feature>
<feature type="cross-link" description="Glycyl lysine isopeptide (Lys-Gly) (interchain with G-Cter in SUMO2)" evidence="1">
    <location>
        <position position="527"/>
    </location>
</feature>
<feature type="cross-link" description="Glycyl lysine isopeptide (Lys-Gly) (interchain with G-Cter in SUMO1); alternate" evidence="1">
    <location>
        <position position="747"/>
    </location>
</feature>
<feature type="cross-link" description="Glycyl lysine isopeptide (Lys-Gly) (interchain with G-Cter in SUMO2); alternate" evidence="1">
    <location>
        <position position="747"/>
    </location>
</feature>
<feature type="splice variant" id="VSP_018970" description="In isoform 2." evidence="32">
    <location>
        <begin position="1"/>
        <end position="521"/>
    </location>
</feature>
<feature type="mutagenesis site" description="Abolished cleavage by caspase-7 (CASP7)." evidence="23">
    <original>D</original>
    <variation>N</variation>
    <location>
        <position position="214"/>
    </location>
</feature>
<feature type="mutagenesis site" description="Does not affect mono-ADP-ribosylation by SIRT6." evidence="22">
    <original>D</original>
    <variation>A</variation>
    <location>
        <position position="387"/>
    </location>
</feature>
<feature type="mutagenesis site" description="Does not affect mono-ADP-ribosylation by SIRT6." evidence="22">
    <original>E</original>
    <variation>A</variation>
    <location>
        <position position="488"/>
    </location>
</feature>
<feature type="mutagenesis site" description="Does not affect mono-ADP-ribosylation by SIRT6." evidence="22">
    <original>E</original>
    <variation>A</variation>
    <location>
        <position position="491"/>
    </location>
</feature>
<feature type="mutagenesis site" description="Does not affect mono-ADP-ribosylation by SIRT6." evidence="22">
    <original>K</original>
    <variation>A</variation>
    <location>
        <position position="498"/>
    </location>
</feature>
<feature type="mutagenesis site" description="Abolished mono-ADP-ribosylation by SIRT6." evidence="22">
    <original>K</original>
    <variation>A</variation>
    <location>
        <position position="520"/>
    </location>
</feature>
<feature type="mutagenesis site" description="Does not affect mono-ADP-ribosylation by SIRT6." evidence="22">
    <original>K</original>
    <variation>A</variation>
    <location>
        <position position="523"/>
    </location>
</feature>
<feature type="sequence conflict" description="In Ref. 3; AA sequence." evidence="33" ref="3">
    <original>A</original>
    <variation>L</variation>
    <location>
        <position position="114"/>
    </location>
</feature>
<feature type="sequence conflict" description="In Ref. 2; AAF61293." evidence="33" ref="2">
    <original>L</original>
    <variation>V</variation>
    <location>
        <position position="591"/>
    </location>
</feature>
<feature type="sequence conflict" description="In Ref. 2; AAF61293." evidence="33" ref="2">
    <original>E</original>
    <variation>D</variation>
    <location>
        <position position="608"/>
    </location>
</feature>
<feature type="sequence conflict" description="In Ref. 2; AAF61293." evidence="33" ref="2">
    <original>Q</original>
    <variation>H</variation>
    <location>
        <position position="612"/>
    </location>
</feature>
<feature type="sequence conflict" description="In Ref. 2; AAF61293." evidence="33" ref="2">
    <original>N</original>
    <variation>D</variation>
    <location>
        <position position="629"/>
    </location>
</feature>
<feature type="sequence conflict" description="In Ref. 2; AAF61293." evidence="33" ref="2">
    <original>D</original>
    <variation>E</variation>
    <location>
        <position position="679"/>
    </location>
</feature>
<feature type="sequence conflict" description="In Ref. 2; AAF61293." evidence="33" ref="2">
    <original>Q</original>
    <variation>E</variation>
    <location>
        <position position="717"/>
    </location>
</feature>
<feature type="sequence conflict" description="In Ref. 2; AAF61293." evidence="33" ref="2">
    <original>Q</original>
    <variation>L</variation>
    <location>
        <position position="758"/>
    </location>
</feature>
<feature type="sequence conflict" description="In Ref. 2; AAF61293." evidence="33" ref="2">
    <original>A</original>
    <variation>C</variation>
    <location>
        <position position="982"/>
    </location>
</feature>
<reference key="1">
    <citation type="journal article" date="1989" name="Nucleic Acids Res.">
        <title>Sequence and organization of the mouse poly (ADP-ribose) polymerase gene.</title>
        <authorList>
            <person name="Huppi K."/>
            <person name="Bhatia K."/>
            <person name="Siwarski D."/>
            <person name="Klinman D."/>
            <person name="Cherney B."/>
            <person name="Smulson M."/>
        </authorList>
    </citation>
    <scope>NUCLEOTIDE SEQUENCE [MRNA] (ISOFORM 1)</scope>
    <source>
        <strain>BXSB</strain>
    </source>
</reference>
<reference key="2">
    <citation type="journal article" date="2000" name="J. Biol. Chem.">
        <title>Characterization of sPARP-1. An alternative product of PARP-1 gene with poly(ADP-ribose) polymerase activity independent of DNA strand breaks.</title>
        <authorList>
            <person name="Sallmann F.R."/>
            <person name="Vodenicharov M.D."/>
            <person name="Wang Z.-Q."/>
            <person name="Poirier G.G."/>
        </authorList>
    </citation>
    <scope>NUCLEOTIDE SEQUENCE [MRNA] (ISOFORM 2)</scope>
    <source>
        <strain>C57BL/6 X 129/Sv</strain>
        <tissue>Fibroblast</tissue>
    </source>
</reference>
<reference key="3">
    <citation type="journal article" date="1998" name="J. Biol. Chem.">
        <title>A B-cell-specific DNA recombination complex.</title>
        <authorList>
            <person name="Borggrefe T."/>
            <person name="Wabl M."/>
            <person name="Akhmedov A.T."/>
            <person name="Jessberger R."/>
        </authorList>
    </citation>
    <scope>PROTEIN SEQUENCE OF 109-119 AND 865-875</scope>
    <scope>SUBUNIT</scope>
    <scope>TISSUE SPECIFICITY</scope>
    <source>
        <strain>C57BL/6J</strain>
        <tissue>Spleen</tissue>
    </source>
</reference>
<reference key="4">
    <citation type="journal article" date="1995" name="Biochimie">
        <title>On the biological role of the nuclear polymerizing NAD+: protein(ADP-ribosyl) transferase (ADPRT): ADPRT from Dictyostelium discoideum and inactivation of the ADPRT gene in the mouse.</title>
        <authorList>
            <person name="Auer B."/>
            <person name="Flick K."/>
            <person name="Wang Z.Q."/>
            <person name="Haidacher D."/>
            <person name="Jaeger S."/>
            <person name="Berghammer H."/>
            <person name="Kofler B."/>
            <person name="Schweiger M."/>
            <person name="Wagner E.F."/>
        </authorList>
    </citation>
    <scope>DISRUPTION PHENOTYPE</scope>
</reference>
<reference key="5">
    <citation type="journal article" date="2002" name="J. Biol. Chem.">
        <title>Poly(ADP-ribose) polymerase-2 (PARP-2) is required for efficient base excision DNA repair in association with PARP-1 and XRCC1.</title>
        <authorList>
            <person name="Schreiber V."/>
            <person name="Ame J.-C."/>
            <person name="Dolle P."/>
            <person name="Schultz I."/>
            <person name="Rinaldi B."/>
            <person name="Fraulob V."/>
            <person name="Menissier-de Murcia J."/>
            <person name="de Murcia G.M."/>
        </authorList>
    </citation>
    <scope>INTERACTION WITH PARP2; XRCC1; POLB AND LRIG3</scope>
    <scope>DEVELOPMENTAL STAGE</scope>
</reference>
<reference key="6">
    <citation type="journal article" date="2002" name="Science">
        <title>Mediation of poly(ADP-ribose) polymerase-1-dependent cell death by apoptosis-inducing factor.</title>
        <authorList>
            <person name="Yu S.W."/>
            <person name="Wang H."/>
            <person name="Poitras M.F."/>
            <person name="Coombs C."/>
            <person name="Bowers W.J."/>
            <person name="Federoff H.J."/>
            <person name="Poirier G.G."/>
            <person name="Dawson T.M."/>
            <person name="Dawson V.L."/>
        </authorList>
    </citation>
    <scope>FUNCTION</scope>
</reference>
<reference key="7">
    <citation type="journal article" date="2003" name="Biochem. Biophys. Res. Commun.">
        <title>Poly(ADP-ribose) polymerase 1 interacts with OAZ and regulates BMP-target genes.</title>
        <authorList>
            <person name="Ku M.-C."/>
            <person name="Stewart S."/>
            <person name="Hata A."/>
        </authorList>
    </citation>
    <scope>INTERACTION WITH ZNF423</scope>
</reference>
<reference key="8">
    <citation type="journal article" date="2003" name="EMBO J.">
        <title>Functional interaction between PARP-1 and PARP-2 in chromosome stability and embryonic development in mouse.</title>
        <authorList>
            <person name="Menissier de Murcia J."/>
            <person name="Ricoul M."/>
            <person name="Tartier L."/>
            <person name="Niedergang C."/>
            <person name="Huber A."/>
            <person name="Dantzer F."/>
            <person name="Schreiber V."/>
            <person name="Ame J.C."/>
            <person name="Dierich A."/>
            <person name="LeMeur M."/>
            <person name="Sabatier L."/>
            <person name="Chambon P."/>
            <person name="de Murcia G."/>
        </authorList>
    </citation>
    <scope>DISRUPTION PHENOTYPE</scope>
</reference>
<reference key="9">
    <citation type="journal article" date="2006" name="J. Biol. Chem.">
        <title>Nitric oxide-dependent negative feedback of PARP-1 trans-activation of the inducible nitric-oxide synthase gene.</title>
        <authorList>
            <person name="Yu Z."/>
            <person name="Kuncewicz T."/>
            <person name="Dubinsky W.P."/>
            <person name="Kone B.C."/>
        </authorList>
    </citation>
    <scope>S-NITROSYLATION</scope>
</reference>
<reference key="10">
    <citation type="journal article" date="2006" name="Proc. Natl. Acad. Sci. U.S.A.">
        <title>Poly(ADP-ribose) (PAR) polymer is a death signal.</title>
        <authorList>
            <person name="Andrabi S.A."/>
            <person name="Kim N.S."/>
            <person name="Yu S.W."/>
            <person name="Wang H."/>
            <person name="Koh D.W."/>
            <person name="Sasaki M."/>
            <person name="Klaus J.A."/>
            <person name="Otsuka T."/>
            <person name="Zhang Z."/>
            <person name="Koehler R.C."/>
            <person name="Hurn P.D."/>
            <person name="Poirier G.G."/>
            <person name="Dawson V.L."/>
            <person name="Dawson T.M."/>
        </authorList>
    </citation>
    <scope>FUNCTION</scope>
</reference>
<reference key="11">
    <citation type="journal article" date="2007" name="Biochem. Biophys. Res. Commun.">
        <title>Rho-kinase modulates the function of STEF, a Rac GEF, through its phosphorylation.</title>
        <authorList>
            <person name="Takefuji M."/>
            <person name="Mori K."/>
            <person name="Morita Y."/>
            <person name="Arimura N."/>
            <person name="Nishimura T."/>
            <person name="Nakayama M."/>
            <person name="Hoshino M."/>
            <person name="Iwamatsu A."/>
            <person name="Murohara T."/>
            <person name="Kaibuchi K."/>
            <person name="Amano M."/>
        </authorList>
    </citation>
    <scope>INTERACTION WITH TIAM2</scope>
</reference>
<reference key="12">
    <citation type="journal article" date="2009" name="EMBO J.">
        <title>PARP-1 transcriptional activity is regulated by sumoylation upon heat shock.</title>
        <authorList>
            <person name="Martin N."/>
            <person name="Schwamborn K."/>
            <person name="Schreiber V."/>
            <person name="Werner A."/>
            <person name="Guillier C."/>
            <person name="Zhang X.D."/>
            <person name="Bischof O."/>
            <person name="Seeler J.S."/>
            <person name="Dejean A."/>
        </authorList>
    </citation>
    <scope>INTERACTION WITH RNF4</scope>
</reference>
<reference key="13">
    <citation type="journal article" date="2010" name="Cell">
        <title>A tissue-specific atlas of mouse protein phosphorylation and expression.</title>
        <authorList>
            <person name="Huttlin E.L."/>
            <person name="Jedrychowski M.P."/>
            <person name="Elias J.E."/>
            <person name="Goswami T."/>
            <person name="Rad R."/>
            <person name="Beausoleil S.A."/>
            <person name="Villen J."/>
            <person name="Haas W."/>
            <person name="Sowa M.E."/>
            <person name="Gygi S.P."/>
        </authorList>
    </citation>
    <scope>IDENTIFICATION BY MASS SPECTROMETRY [LARGE SCALE ANALYSIS]</scope>
    <source>
        <tissue>Heart</tissue>
        <tissue>Kidney</tissue>
        <tissue>Liver</tissue>
        <tissue>Pancreas</tissue>
        <tissue>Spleen</tissue>
        <tissue>Testis</tissue>
    </source>
</reference>
<reference key="14">
    <citation type="journal article" date="2011" name="Oncogene">
        <title>Poly(ADP-ribose)-dependent regulation of Snail1 protein stability.</title>
        <authorList>
            <person name="Rodriguez M.I."/>
            <person name="Gonzalez-Flores A."/>
            <person name="Dantzer F."/>
            <person name="Collard J."/>
            <person name="de Herreros A.G."/>
            <person name="Oliver F.J."/>
        </authorList>
    </citation>
    <scope>INTERACTION WITH SNAI1</scope>
</reference>
<reference key="15">
    <citation type="journal article" date="2011" name="Science">
        <title>SIRT6 promotes DNA repair under stress by activating PARP1.</title>
        <authorList>
            <person name="Mao Z."/>
            <person name="Hine C."/>
            <person name="Tian X."/>
            <person name="Van Meter M."/>
            <person name="Au M."/>
            <person name="Vaidya A."/>
            <person name="Seluanov A."/>
            <person name="Gorbunova V."/>
        </authorList>
    </citation>
    <scope>FUNCTION</scope>
    <scope>ADP-RIBOSYLATION AT LYS-520</scope>
    <scope>MUTAGENESIS OF ASP-387; GLU-488; GLU-491; LYS-498; LYS-520 AND LYS-523</scope>
</reference>
<reference key="16">
    <citation type="journal article" date="2011" name="Sci. Signal.">
        <title>Poly(ADP-ribose) (PAR) binding to apoptosis-inducing factor is critical for PAR polymerase-1-dependent cell death (parthanatos).</title>
        <authorList>
            <person name="Wang Y."/>
            <person name="Kim N.S."/>
            <person name="Haince J.F."/>
            <person name="Kang H.C."/>
            <person name="David K.K."/>
            <person name="Andrabi S.A."/>
            <person name="Poirier G.G."/>
            <person name="Dawson V.L."/>
            <person name="Dawson T.M."/>
        </authorList>
    </citation>
    <scope>FUNCTION</scope>
</reference>
<reference key="17">
    <citation type="journal article" date="2012" name="Mol. Cell">
        <title>Inflammasome-activated caspase 7 cleaves PARP1 to enhance the expression of a subset of NF-kappaB target genes.</title>
        <authorList>
            <person name="Erener S."/>
            <person name="Petrilli V."/>
            <person name="Kassner I."/>
            <person name="Minotti R."/>
            <person name="Castillo R."/>
            <person name="Santoro R."/>
            <person name="Hassa P.O."/>
            <person name="Tschopp J."/>
            <person name="Hottiger M.O."/>
        </authorList>
    </citation>
    <scope>FUNCTION</scope>
    <scope>PROTEOLYTIC CLEAVAGE</scope>
    <scope>MUTAGENESIS OF ASP-214</scope>
</reference>
<reference key="18">
    <citation type="journal article" date="2013" name="Mol. Cell">
        <title>SIRT5-mediated lysine desuccinylation impacts diverse metabolic pathways.</title>
        <authorList>
            <person name="Park J."/>
            <person name="Chen Y."/>
            <person name="Tishkoff D.X."/>
            <person name="Peng C."/>
            <person name="Tan M."/>
            <person name="Dai L."/>
            <person name="Xie Z."/>
            <person name="Zhang Y."/>
            <person name="Zwaans B.M."/>
            <person name="Skinner M.E."/>
            <person name="Lombard D.B."/>
            <person name="Zhao Y."/>
        </authorList>
    </citation>
    <scope>ACETYLATION [LARGE SCALE ANALYSIS] AT LYS-97</scope>
    <scope>IDENTIFICATION BY MASS SPECTROMETRY [LARGE SCALE ANALYSIS]</scope>
    <source>
        <tissue>Embryonic fibroblast</tissue>
    </source>
</reference>
<reference key="19">
    <citation type="journal article" date="2015" name="Cell Stem Cell">
        <title>Filia Is an ESC-Specific Regulator of DNA Damage Response and Safeguards Genomic Stability.</title>
        <authorList>
            <person name="Zhao B."/>
            <person name="Zhang W.D."/>
            <person name="Duan Y.L."/>
            <person name="Lu Y.Q."/>
            <person name="Cun Y.X."/>
            <person name="Li C.H."/>
            <person name="Guo K."/>
            <person name="Nie W.H."/>
            <person name="Li L."/>
            <person name="Zhang R."/>
            <person name="Zheng P."/>
        </authorList>
    </citation>
    <scope>INTERACTION WITH KHDC3L</scope>
    <scope>SUBCELLULAR LOCATION</scope>
</reference>
<reference key="20">
    <citation type="journal article" date="2017" name="Nat. Struct. Mol. Biol.">
        <title>MacroH2A1.1 regulates mitochondrial respiration by limiting nuclear NAD+ consumption.</title>
        <authorList>
            <person name="Posavec Marjanovic M."/>
            <person name="Hurtado-Bages S."/>
            <person name="Lassi M."/>
            <person name="Valero V."/>
            <person name="Malinverni R."/>
            <person name="Delage H."/>
            <person name="Navarro M."/>
            <person name="Corujo D."/>
            <person name="Guberovic I."/>
            <person name="Douet J."/>
            <person name="Gama-Perez P."/>
            <person name="Garcia-Roves P.M."/>
            <person name="Ahel I."/>
            <person name="Ladurner A.G."/>
            <person name="Yanes O."/>
            <person name="Bouvet P."/>
            <person name="Suelves M."/>
            <person name="Teperino R."/>
            <person name="Pospisilik J.A."/>
            <person name="Buschbeck M."/>
        </authorList>
    </citation>
    <scope>INTERACTION WITH MACROH2A1</scope>
</reference>
<reference key="21">
    <citation type="journal article" date="2020" name="Mol. Cell">
        <title>Functional interplay between histone H2B ADP-ribosylation and phosphorylation controls adipogenesis.</title>
        <authorList>
            <person name="Huang D."/>
            <person name="Camacho C.V."/>
            <person name="Setlem R."/>
            <person name="Ryu K.W."/>
            <person name="Parameswaran B."/>
            <person name="Gupta R.K."/>
            <person name="Kraus W.L."/>
        </authorList>
    </citation>
    <scope>FUNCTION</scope>
    <scope>CATALYTIC ACTIVITY</scope>
    <scope>INTERACTION WITH NMNAT1</scope>
</reference>
<reference key="22">
    <citation type="journal article" date="2021" name="Proc. Natl. Acad. Sci. U.S.A.">
        <title>Deficiency of PARP-1 and PARP-2 in the mouse uterus results in decidualization failure and pregnancy loss.</title>
        <authorList>
            <person name="Kelleher A.M."/>
            <person name="Setlem R."/>
            <person name="Dantzer F."/>
            <person name="DeMayo F.J."/>
            <person name="Lydon J.P."/>
            <person name="Kraus W.L."/>
        </authorList>
    </citation>
    <scope>DISRUPTION PHENOTYPE</scope>
</reference>
<reference key="23">
    <citation type="journal article" date="2021" name="Mol. Cell">
        <title>Parp1 promotes sleep, which enhances DNA repair in neurons.</title>
        <authorList>
            <person name="Zada D."/>
            <person name="Sela Y."/>
            <person name="Matosevich N."/>
            <person name="Monsonego A."/>
            <person name="Lerer-Goldshtein T."/>
            <person name="Nir Y."/>
            <person name="Appelbaum L."/>
        </authorList>
    </citation>
    <scope>FUNCTION</scope>
</reference>
<reference key="24">
    <citation type="journal article" date="2022" name="Mol. Cell">
        <title>Cytoplasmic PARP1 links the genome instability to the inhibition of antiviral immunity through PARylating cGAS.</title>
        <authorList>
            <person name="Wang F."/>
            <person name="Zhao M."/>
            <person name="Chang B."/>
            <person name="Zhou Y."/>
            <person name="Wu X."/>
            <person name="Ma M."/>
            <person name="Liu S."/>
            <person name="Cao Y."/>
            <person name="Zheng M."/>
            <person name="Dang Y."/>
            <person name="Xu J."/>
            <person name="Chen L."/>
            <person name="Liu T."/>
            <person name="Tang F."/>
            <person name="Ren Y."/>
            <person name="Xu Z."/>
            <person name="Mao Z."/>
            <person name="Huang K."/>
            <person name="Luo M."/>
            <person name="Li J."/>
            <person name="Liu H."/>
            <person name="Ge B."/>
        </authorList>
    </citation>
    <scope>FUNCTION</scope>
</reference>
<keyword id="KW-0007">Acetylation</keyword>
<keyword id="KW-0013">ADP-ribosylation</keyword>
<keyword id="KW-0021">Allosteric enzyme</keyword>
<keyword id="KW-0024">Alternative initiation</keyword>
<keyword id="KW-0053">Apoptosis</keyword>
<keyword id="KW-0158">Chromosome</keyword>
<keyword id="KW-0963">Cytoplasm</keyword>
<keyword id="KW-0903">Direct protein sequencing</keyword>
<keyword id="KW-0227">DNA damage</keyword>
<keyword id="KW-0234">DNA repair</keyword>
<keyword id="KW-0238">DNA-binding</keyword>
<keyword id="KW-0328">Glycosyltransferase</keyword>
<keyword id="KW-0391">Immunity</keyword>
<keyword id="KW-0399">Innate immunity</keyword>
<keyword id="KW-1017">Isopeptide bond</keyword>
<keyword id="KW-0479">Metal-binding</keyword>
<keyword id="KW-0520">NAD</keyword>
<keyword id="KW-0548">Nucleotidyltransferase</keyword>
<keyword id="KW-0539">Nucleus</keyword>
<keyword id="KW-0597">Phosphoprotein</keyword>
<keyword id="KW-1185">Reference proteome</keyword>
<keyword id="KW-0677">Repeat</keyword>
<keyword id="KW-0702">S-nitrosylation</keyword>
<keyword id="KW-0804">Transcription</keyword>
<keyword id="KW-0805">Transcription regulation</keyword>
<keyword id="KW-0808">Transferase</keyword>
<keyword id="KW-0832">Ubl conjugation</keyword>
<keyword id="KW-0862">Zinc</keyword>
<keyword id="KW-0863">Zinc-finger</keyword>
<accession>P11103</accession>
<accession>Q9JLX4</accession>
<accession>Q9QVQ3</accession>
<organism>
    <name type="scientific">Mus musculus</name>
    <name type="common">Mouse</name>
    <dbReference type="NCBI Taxonomy" id="10090"/>
    <lineage>
        <taxon>Eukaryota</taxon>
        <taxon>Metazoa</taxon>
        <taxon>Chordata</taxon>
        <taxon>Craniata</taxon>
        <taxon>Vertebrata</taxon>
        <taxon>Euteleostomi</taxon>
        <taxon>Mammalia</taxon>
        <taxon>Eutheria</taxon>
        <taxon>Euarchontoglires</taxon>
        <taxon>Glires</taxon>
        <taxon>Rodentia</taxon>
        <taxon>Myomorpha</taxon>
        <taxon>Muroidea</taxon>
        <taxon>Muridae</taxon>
        <taxon>Murinae</taxon>
        <taxon>Mus</taxon>
        <taxon>Mus</taxon>
    </lineage>
</organism>
<name>PARP1_MOUSE</name>
<gene>
    <name type="primary">Parp1</name>
    <name type="synonym">Adprp</name>
    <name type="synonym">Adprt</name>
    <name type="synonym">Adprt1</name>
</gene>
<dbReference type="EC" id="2.4.2.30" evidence="1"/>
<dbReference type="EC" id="2.4.2.-" evidence="1 26"/>
<dbReference type="EMBL" id="X14206">
    <property type="protein sequence ID" value="CAA32421.1"/>
    <property type="molecule type" value="mRNA"/>
</dbReference>
<dbReference type="EMBL" id="AF126717">
    <property type="protein sequence ID" value="AAF61293.1"/>
    <property type="molecule type" value="mRNA"/>
</dbReference>
<dbReference type="PIR" id="S04200">
    <property type="entry name" value="S04200"/>
</dbReference>
<dbReference type="SMR" id="P11103"/>
<dbReference type="CORUM" id="P11103"/>
<dbReference type="DIP" id="DIP-39371N"/>
<dbReference type="FunCoup" id="P11103">
    <property type="interactions" value="2360"/>
</dbReference>
<dbReference type="IntAct" id="P11103">
    <property type="interactions" value="21"/>
</dbReference>
<dbReference type="MINT" id="P11103"/>
<dbReference type="STRING" id="10090.ENSMUSP00000027777"/>
<dbReference type="BindingDB" id="P11103"/>
<dbReference type="ChEMBL" id="CHEMBL3740"/>
<dbReference type="MoonProt" id="P11103"/>
<dbReference type="GlyGen" id="P11103">
    <property type="glycosylation" value="2 sites, 1 N-linked glycan (1 site), 1 O-linked glycan (1 site)"/>
</dbReference>
<dbReference type="iPTMnet" id="P11103"/>
<dbReference type="PhosphoSitePlus" id="P11103"/>
<dbReference type="SwissPalm" id="P11103"/>
<dbReference type="jPOST" id="P11103"/>
<dbReference type="PaxDb" id="10090-ENSMUSP00000027777"/>
<dbReference type="PeptideAtlas" id="P11103"/>
<dbReference type="ProteomicsDB" id="288064">
    <molecule id="P11103-1"/>
</dbReference>
<dbReference type="ProteomicsDB" id="288065">
    <molecule id="P11103-2"/>
</dbReference>
<dbReference type="Pumba" id="P11103"/>
<dbReference type="AGR" id="MGI:1340806"/>
<dbReference type="MGI" id="MGI:1340806">
    <property type="gene designation" value="Parp1"/>
</dbReference>
<dbReference type="eggNOG" id="KOG1037">
    <property type="taxonomic scope" value="Eukaryota"/>
</dbReference>
<dbReference type="InParanoid" id="P11103"/>
<dbReference type="PhylomeDB" id="P11103"/>
<dbReference type="Reactome" id="R-MMU-110362">
    <property type="pathway name" value="POLB-Dependent Long Patch Base Excision Repair"/>
</dbReference>
<dbReference type="Reactome" id="R-MMU-2173795">
    <property type="pathway name" value="Downregulation of SMAD2/3:SMAD4 transcriptional activity"/>
</dbReference>
<dbReference type="Reactome" id="R-MMU-3108214">
    <property type="pathway name" value="SUMOylation of DNA damage response and repair proteins"/>
</dbReference>
<dbReference type="Reactome" id="R-MMU-5685939">
    <property type="pathway name" value="HDR through MMEJ (alt-NHEJ)"/>
</dbReference>
<dbReference type="Reactome" id="R-MMU-5696394">
    <property type="pathway name" value="DNA Damage Recognition in GG-NER"/>
</dbReference>
<dbReference type="Reactome" id="R-MMU-5696395">
    <property type="pathway name" value="Formation of Incision Complex in GG-NER"/>
</dbReference>
<dbReference type="Reactome" id="R-MMU-5696400">
    <property type="pathway name" value="Dual Incision in GG-NER"/>
</dbReference>
<dbReference type="ChiTaRS" id="Parp1">
    <property type="organism name" value="mouse"/>
</dbReference>
<dbReference type="PRO" id="PR:P11103"/>
<dbReference type="Proteomes" id="UP000000589">
    <property type="component" value="Unplaced"/>
</dbReference>
<dbReference type="RNAct" id="P11103">
    <property type="molecule type" value="protein"/>
</dbReference>
<dbReference type="GO" id="GO:0000785">
    <property type="term" value="C:chromatin"/>
    <property type="evidence" value="ECO:0000314"/>
    <property type="project" value="UniProt"/>
</dbReference>
<dbReference type="GO" id="GO:0005737">
    <property type="term" value="C:cytoplasm"/>
    <property type="evidence" value="ECO:0000314"/>
    <property type="project" value="BHF-UCL"/>
</dbReference>
<dbReference type="GO" id="GO:0005829">
    <property type="term" value="C:cytosol"/>
    <property type="evidence" value="ECO:0000250"/>
    <property type="project" value="UniProtKB"/>
</dbReference>
<dbReference type="GO" id="GO:0005739">
    <property type="term" value="C:mitochondrion"/>
    <property type="evidence" value="ECO:0000266"/>
    <property type="project" value="MGI"/>
</dbReference>
<dbReference type="GO" id="GO:0043596">
    <property type="term" value="C:nuclear replication fork"/>
    <property type="evidence" value="ECO:0000250"/>
    <property type="project" value="UniProtKB"/>
</dbReference>
<dbReference type="GO" id="GO:0005730">
    <property type="term" value="C:nucleolus"/>
    <property type="evidence" value="ECO:0000314"/>
    <property type="project" value="MGI"/>
</dbReference>
<dbReference type="GO" id="GO:0005654">
    <property type="term" value="C:nucleoplasm"/>
    <property type="evidence" value="ECO:0000314"/>
    <property type="project" value="MGI"/>
</dbReference>
<dbReference type="GO" id="GO:0005634">
    <property type="term" value="C:nucleus"/>
    <property type="evidence" value="ECO:0000314"/>
    <property type="project" value="UniProtKB"/>
</dbReference>
<dbReference type="GO" id="GO:0032991">
    <property type="term" value="C:protein-containing complex"/>
    <property type="evidence" value="ECO:0000314"/>
    <property type="project" value="MGI"/>
</dbReference>
<dbReference type="GO" id="GO:0090734">
    <property type="term" value="C:site of DNA damage"/>
    <property type="evidence" value="ECO:0000314"/>
    <property type="project" value="UniProt"/>
</dbReference>
<dbReference type="GO" id="GO:0035861">
    <property type="term" value="C:site of double-strand break"/>
    <property type="evidence" value="ECO:0000250"/>
    <property type="project" value="UniProtKB"/>
</dbReference>
<dbReference type="GO" id="GO:0003682">
    <property type="term" value="F:chromatin binding"/>
    <property type="evidence" value="ECO:0000314"/>
    <property type="project" value="MGI"/>
</dbReference>
<dbReference type="GO" id="GO:0003684">
    <property type="term" value="F:damaged DNA binding"/>
    <property type="evidence" value="ECO:0000250"/>
    <property type="project" value="UniProtKB"/>
</dbReference>
<dbReference type="GO" id="GO:0051287">
    <property type="term" value="F:NAD binding"/>
    <property type="evidence" value="ECO:0007669"/>
    <property type="project" value="InterPro"/>
</dbReference>
<dbReference type="GO" id="GO:0003950">
    <property type="term" value="F:NAD+ poly-ADP-ribosyltransferase activity"/>
    <property type="evidence" value="ECO:0000314"/>
    <property type="project" value="MGI"/>
</dbReference>
<dbReference type="GO" id="GO:0140822">
    <property type="term" value="F:NAD+-histone H2BE35 glutamate ADP-ribosyltransferase activity"/>
    <property type="evidence" value="ECO:0000314"/>
    <property type="project" value="UniProt"/>
</dbReference>
<dbReference type="GO" id="GO:1990404">
    <property type="term" value="F:NAD+-protein mono-ADP-ribosyltransferase activity"/>
    <property type="evidence" value="ECO:0000314"/>
    <property type="project" value="MGI"/>
</dbReference>
<dbReference type="GO" id="GO:0140806">
    <property type="term" value="F:NAD+-protein-aspartate ADP-ribosyltransferase activity"/>
    <property type="evidence" value="ECO:0000314"/>
    <property type="project" value="UniProtKB"/>
</dbReference>
<dbReference type="GO" id="GO:0140807">
    <property type="term" value="F:NAD+-protein-glutamate ADP-ribosyltransferase activity"/>
    <property type="evidence" value="ECO:0000314"/>
    <property type="project" value="UniProtKB"/>
</dbReference>
<dbReference type="GO" id="GO:0140815">
    <property type="term" value="F:NAD+-protein-histidine ADP-ribosyltransferase activity"/>
    <property type="evidence" value="ECO:0000250"/>
    <property type="project" value="UniProtKB"/>
</dbReference>
<dbReference type="GO" id="GO:0140805">
    <property type="term" value="F:NAD+-protein-serine ADP-ribosyltransferase activity"/>
    <property type="evidence" value="ECO:0000250"/>
    <property type="project" value="UniProtKB"/>
</dbReference>
<dbReference type="GO" id="GO:0140808">
    <property type="term" value="F:NAD+-protein-tyrosine ADP-ribosyltransferase activity"/>
    <property type="evidence" value="ECO:0000250"/>
    <property type="project" value="UniProtKB"/>
</dbReference>
<dbReference type="GO" id="GO:0031491">
    <property type="term" value="F:nucleosome binding"/>
    <property type="evidence" value="ECO:0000250"/>
    <property type="project" value="UniProtKB"/>
</dbReference>
<dbReference type="GO" id="GO:0016779">
    <property type="term" value="F:nucleotidyltransferase activity"/>
    <property type="evidence" value="ECO:0007669"/>
    <property type="project" value="UniProtKB-KW"/>
</dbReference>
<dbReference type="GO" id="GO:0042803">
    <property type="term" value="F:protein homodimerization activity"/>
    <property type="evidence" value="ECO:0000250"/>
    <property type="project" value="UniProtKB"/>
</dbReference>
<dbReference type="GO" id="GO:0008270">
    <property type="term" value="F:zinc ion binding"/>
    <property type="evidence" value="ECO:0000250"/>
    <property type="project" value="UniProtKB"/>
</dbReference>
<dbReference type="GO" id="GO:0006915">
    <property type="term" value="P:apoptotic process"/>
    <property type="evidence" value="ECO:0007669"/>
    <property type="project" value="UniProtKB-KW"/>
</dbReference>
<dbReference type="GO" id="GO:1990966">
    <property type="term" value="P:ATP generation from poly-ADP-D-ribose"/>
    <property type="evidence" value="ECO:0000250"/>
    <property type="project" value="UniProtKB"/>
</dbReference>
<dbReference type="GO" id="GO:0006284">
    <property type="term" value="P:base-excision repair"/>
    <property type="evidence" value="ECO:0000315"/>
    <property type="project" value="MGI"/>
</dbReference>
<dbReference type="GO" id="GO:0048148">
    <property type="term" value="P:behavioral response to cocaine"/>
    <property type="evidence" value="ECO:0000315"/>
    <property type="project" value="MGI"/>
</dbReference>
<dbReference type="GO" id="GO:0034599">
    <property type="term" value="P:cellular response to oxidative stress"/>
    <property type="evidence" value="ECO:0000266"/>
    <property type="project" value="MGI"/>
</dbReference>
<dbReference type="GO" id="GO:0071451">
    <property type="term" value="P:cellular response to superoxide"/>
    <property type="evidence" value="ECO:0000314"/>
    <property type="project" value="MGI"/>
</dbReference>
<dbReference type="GO" id="GO:0046697">
    <property type="term" value="P:decidualization"/>
    <property type="evidence" value="ECO:0000315"/>
    <property type="project" value="UniProtKB"/>
</dbReference>
<dbReference type="GO" id="GO:0030592">
    <property type="term" value="P:DNA ADP-ribosylation"/>
    <property type="evidence" value="ECO:0000250"/>
    <property type="project" value="UniProtKB"/>
</dbReference>
<dbReference type="GO" id="GO:0006974">
    <property type="term" value="P:DNA damage response"/>
    <property type="evidence" value="ECO:0000250"/>
    <property type="project" value="UniProtKB"/>
</dbReference>
<dbReference type="GO" id="GO:0006259">
    <property type="term" value="P:DNA metabolic process"/>
    <property type="evidence" value="ECO:0000315"/>
    <property type="project" value="MGI"/>
</dbReference>
<dbReference type="GO" id="GO:0006281">
    <property type="term" value="P:DNA repair"/>
    <property type="evidence" value="ECO:0000314"/>
    <property type="project" value="UniProt"/>
</dbReference>
<dbReference type="GO" id="GO:0006302">
    <property type="term" value="P:double-strand break repair"/>
    <property type="evidence" value="ECO:0000316"/>
    <property type="project" value="MGI"/>
</dbReference>
<dbReference type="GO" id="GO:0045087">
    <property type="term" value="P:innate immune response"/>
    <property type="evidence" value="ECO:0007669"/>
    <property type="project" value="UniProtKB-KW"/>
</dbReference>
<dbReference type="GO" id="GO:0032042">
    <property type="term" value="P:mitochondrial DNA metabolic process"/>
    <property type="evidence" value="ECO:0000266"/>
    <property type="project" value="MGI"/>
</dbReference>
<dbReference type="GO" id="GO:0043504">
    <property type="term" value="P:mitochondrial DNA repair"/>
    <property type="evidence" value="ECO:0000266"/>
    <property type="project" value="MGI"/>
</dbReference>
<dbReference type="GO" id="GO:0007005">
    <property type="term" value="P:mitochondrion organization"/>
    <property type="evidence" value="ECO:0000315"/>
    <property type="project" value="MGI"/>
</dbReference>
<dbReference type="GO" id="GO:1904178">
    <property type="term" value="P:negative regulation of adipose tissue development"/>
    <property type="evidence" value="ECO:0000314"/>
    <property type="project" value="UniProt"/>
</dbReference>
<dbReference type="GO" id="GO:0045892">
    <property type="term" value="P:negative regulation of DNA-templated transcription"/>
    <property type="evidence" value="ECO:0000314"/>
    <property type="project" value="UniProt"/>
</dbReference>
<dbReference type="GO" id="GO:0045824">
    <property type="term" value="P:negative regulation of innate immune response"/>
    <property type="evidence" value="ECO:0000315"/>
    <property type="project" value="UniProtKB"/>
</dbReference>
<dbReference type="GO" id="GO:0032700">
    <property type="term" value="P:negative regulation of interleukin-17 production"/>
    <property type="evidence" value="ECO:0000315"/>
    <property type="project" value="MGI"/>
</dbReference>
<dbReference type="GO" id="GO:1904357">
    <property type="term" value="P:negative regulation of telomere maintenance via telomere lengthening"/>
    <property type="evidence" value="ECO:0000315"/>
    <property type="project" value="BHF-UCL"/>
</dbReference>
<dbReference type="GO" id="GO:0000122">
    <property type="term" value="P:negative regulation of transcription by RNA polymerase II"/>
    <property type="evidence" value="ECO:0000250"/>
    <property type="project" value="UniProtKB"/>
</dbReference>
<dbReference type="GO" id="GO:0010613">
    <property type="term" value="P:positive regulation of cardiac muscle hypertrophy"/>
    <property type="evidence" value="ECO:0000250"/>
    <property type="project" value="UniProtKB"/>
</dbReference>
<dbReference type="GO" id="GO:1905168">
    <property type="term" value="P:positive regulation of double-strand break repair via homologous recombination"/>
    <property type="evidence" value="ECO:0000250"/>
    <property type="project" value="UniProtKB"/>
</dbReference>
<dbReference type="GO" id="GO:0060545">
    <property type="term" value="P:positive regulation of necroptotic process"/>
    <property type="evidence" value="ECO:0000314"/>
    <property type="project" value="UniProtKB"/>
</dbReference>
<dbReference type="GO" id="GO:0070213">
    <property type="term" value="P:protein auto-ADP-ribosylation"/>
    <property type="evidence" value="ECO:0000250"/>
    <property type="project" value="UniProtKB"/>
</dbReference>
<dbReference type="GO" id="GO:0036211">
    <property type="term" value="P:protein modification process"/>
    <property type="evidence" value="ECO:0000266"/>
    <property type="project" value="MGI"/>
</dbReference>
<dbReference type="GO" id="GO:0070212">
    <property type="term" value="P:protein poly-ADP-ribosylation"/>
    <property type="evidence" value="ECO:0000314"/>
    <property type="project" value="MGI"/>
</dbReference>
<dbReference type="GO" id="GO:0045188">
    <property type="term" value="P:regulation of circadian sleep/wake cycle, non-REM sleep"/>
    <property type="evidence" value="ECO:0000315"/>
    <property type="project" value="UniProtKB"/>
</dbReference>
<dbReference type="GO" id="GO:0040009">
    <property type="term" value="P:regulation of growth rate"/>
    <property type="evidence" value="ECO:0000315"/>
    <property type="project" value="MGI"/>
</dbReference>
<dbReference type="GO" id="GO:0032880">
    <property type="term" value="P:regulation of protein localization"/>
    <property type="evidence" value="ECO:0000266"/>
    <property type="project" value="MGI"/>
</dbReference>
<dbReference type="GO" id="GO:1903516">
    <property type="term" value="P:regulation of single strand break repair"/>
    <property type="evidence" value="ECO:0000315"/>
    <property type="project" value="MGI"/>
</dbReference>
<dbReference type="GO" id="GO:0071932">
    <property type="term" value="P:replication fork reversal"/>
    <property type="evidence" value="ECO:0000250"/>
    <property type="project" value="UniProtKB"/>
</dbReference>
<dbReference type="GO" id="GO:0000723">
    <property type="term" value="P:telomere maintenance"/>
    <property type="evidence" value="ECO:0000315"/>
    <property type="project" value="MGI"/>
</dbReference>
<dbReference type="CDD" id="cd17747">
    <property type="entry name" value="BRCT_PARP1"/>
    <property type="match status" value="1"/>
</dbReference>
<dbReference type="CDD" id="cd01437">
    <property type="entry name" value="parp_like"/>
    <property type="match status" value="1"/>
</dbReference>
<dbReference type="CDD" id="cd08001">
    <property type="entry name" value="WGR_PARP1_like"/>
    <property type="match status" value="1"/>
</dbReference>
<dbReference type="FunFam" id="1.10.20.130:FF:000001">
    <property type="entry name" value="Poly [ADP-ribose] polymerase"/>
    <property type="match status" value="1"/>
</dbReference>
<dbReference type="FunFam" id="1.20.142.10:FF:000001">
    <property type="entry name" value="Poly [ADP-ribose] polymerase"/>
    <property type="match status" value="1"/>
</dbReference>
<dbReference type="FunFam" id="2.20.25.630:FF:000001">
    <property type="entry name" value="Poly [ADP-ribose] polymerase"/>
    <property type="match status" value="1"/>
</dbReference>
<dbReference type="FunFam" id="3.30.1740.10:FF:000002">
    <property type="entry name" value="Poly [ADP-ribose] polymerase"/>
    <property type="match status" value="1"/>
</dbReference>
<dbReference type="FunFam" id="3.30.1740.10:FF:000003">
    <property type="entry name" value="Poly [ADP-ribose] polymerase"/>
    <property type="match status" value="1"/>
</dbReference>
<dbReference type="FunFam" id="3.40.50.10190:FF:000030">
    <property type="entry name" value="Poly [ADP-ribose] polymerase"/>
    <property type="match status" value="1"/>
</dbReference>
<dbReference type="FunFam" id="3.90.228.10:FF:000002">
    <property type="entry name" value="Poly [ADP-ribose] polymerase"/>
    <property type="match status" value="1"/>
</dbReference>
<dbReference type="Gene3D" id="1.10.20.130">
    <property type="match status" value="1"/>
</dbReference>
<dbReference type="Gene3D" id="2.20.25.630">
    <property type="match status" value="1"/>
</dbReference>
<dbReference type="Gene3D" id="3.90.228.10">
    <property type="match status" value="1"/>
</dbReference>
<dbReference type="Gene3D" id="3.40.50.10190">
    <property type="entry name" value="BRCT domain"/>
    <property type="match status" value="1"/>
</dbReference>
<dbReference type="Gene3D" id="1.20.142.10">
    <property type="entry name" value="Poly(ADP-ribose) polymerase, regulatory domain"/>
    <property type="match status" value="1"/>
</dbReference>
<dbReference type="Gene3D" id="3.30.1740.10">
    <property type="entry name" value="Zinc finger, PARP-type"/>
    <property type="match status" value="2"/>
</dbReference>
<dbReference type="InterPro" id="IPR050800">
    <property type="entry name" value="ARTD/PARP"/>
</dbReference>
<dbReference type="InterPro" id="IPR001357">
    <property type="entry name" value="BRCT_dom"/>
</dbReference>
<dbReference type="InterPro" id="IPR036420">
    <property type="entry name" value="BRCT_dom_sf"/>
</dbReference>
<dbReference type="InterPro" id="IPR038650">
    <property type="entry name" value="PADR1_C_dom_sf"/>
</dbReference>
<dbReference type="InterPro" id="IPR008288">
    <property type="entry name" value="PARP"/>
</dbReference>
<dbReference type="InterPro" id="IPR049296">
    <property type="entry name" value="PARP1-like_PADR1_N"/>
</dbReference>
<dbReference type="InterPro" id="IPR012982">
    <property type="entry name" value="PARP1-like_PADR1_Zn_ribbon"/>
</dbReference>
<dbReference type="InterPro" id="IPR012317">
    <property type="entry name" value="Poly(ADP-ribose)pol_cat_dom"/>
</dbReference>
<dbReference type="InterPro" id="IPR004102">
    <property type="entry name" value="Poly(ADP-ribose)pol_reg_dom"/>
</dbReference>
<dbReference type="InterPro" id="IPR036616">
    <property type="entry name" value="Poly(ADP-ribose)pol_reg_dom_sf"/>
</dbReference>
<dbReference type="InterPro" id="IPR036930">
    <property type="entry name" value="WGR_dom_sf"/>
</dbReference>
<dbReference type="InterPro" id="IPR008893">
    <property type="entry name" value="WGR_domain"/>
</dbReference>
<dbReference type="InterPro" id="IPR001510">
    <property type="entry name" value="Znf_PARP"/>
</dbReference>
<dbReference type="InterPro" id="IPR036957">
    <property type="entry name" value="Znf_PARP_sf"/>
</dbReference>
<dbReference type="PANTHER" id="PTHR10459">
    <property type="entry name" value="DNA LIGASE"/>
    <property type="match status" value="1"/>
</dbReference>
<dbReference type="PANTHER" id="PTHR10459:SF112">
    <property type="entry name" value="POLY [ADP-RIBOSE] POLYMERASE 1"/>
    <property type="match status" value="1"/>
</dbReference>
<dbReference type="Pfam" id="PF00533">
    <property type="entry name" value="BRCT"/>
    <property type="match status" value="1"/>
</dbReference>
<dbReference type="Pfam" id="PF21728">
    <property type="entry name" value="PADR1_N"/>
    <property type="match status" value="1"/>
</dbReference>
<dbReference type="Pfam" id="PF00644">
    <property type="entry name" value="PARP"/>
    <property type="match status" value="1"/>
</dbReference>
<dbReference type="Pfam" id="PF02877">
    <property type="entry name" value="PARP_reg"/>
    <property type="match status" value="1"/>
</dbReference>
<dbReference type="Pfam" id="PF05406">
    <property type="entry name" value="WGR"/>
    <property type="match status" value="1"/>
</dbReference>
<dbReference type="Pfam" id="PF00645">
    <property type="entry name" value="zf-PARP"/>
    <property type="match status" value="2"/>
</dbReference>
<dbReference type="Pfam" id="PF08063">
    <property type="entry name" value="Zn_ribbon_PADR1"/>
    <property type="match status" value="1"/>
</dbReference>
<dbReference type="PIRSF" id="PIRSF000489">
    <property type="entry name" value="NAD_ADPRT"/>
    <property type="match status" value="1"/>
</dbReference>
<dbReference type="SMART" id="SM00292">
    <property type="entry name" value="BRCT"/>
    <property type="match status" value="1"/>
</dbReference>
<dbReference type="SMART" id="SM01335">
    <property type="entry name" value="PADR1"/>
    <property type="match status" value="1"/>
</dbReference>
<dbReference type="SMART" id="SM00773">
    <property type="entry name" value="WGR"/>
    <property type="match status" value="1"/>
</dbReference>
<dbReference type="SMART" id="SM01336">
    <property type="entry name" value="zf-PARP"/>
    <property type="match status" value="2"/>
</dbReference>
<dbReference type="SUPFAM" id="SSF56399">
    <property type="entry name" value="ADP-ribosylation"/>
    <property type="match status" value="1"/>
</dbReference>
<dbReference type="SUPFAM" id="SSF52113">
    <property type="entry name" value="BRCT domain"/>
    <property type="match status" value="1"/>
</dbReference>
<dbReference type="SUPFAM" id="SSF47587">
    <property type="entry name" value="Domain of poly(ADP-ribose) polymerase"/>
    <property type="match status" value="1"/>
</dbReference>
<dbReference type="SUPFAM" id="SSF57716">
    <property type="entry name" value="Glucocorticoid receptor-like (DNA-binding domain)"/>
    <property type="match status" value="2"/>
</dbReference>
<dbReference type="SUPFAM" id="SSF142921">
    <property type="entry name" value="WGR domain-like"/>
    <property type="match status" value="1"/>
</dbReference>
<dbReference type="PROSITE" id="PS50172">
    <property type="entry name" value="BRCT"/>
    <property type="match status" value="1"/>
</dbReference>
<dbReference type="PROSITE" id="PS52007">
    <property type="entry name" value="PADR1"/>
    <property type="match status" value="1"/>
</dbReference>
<dbReference type="PROSITE" id="PS51060">
    <property type="entry name" value="PARP_ALPHA_HD"/>
    <property type="match status" value="1"/>
</dbReference>
<dbReference type="PROSITE" id="PS51059">
    <property type="entry name" value="PARP_CATALYTIC"/>
    <property type="match status" value="1"/>
</dbReference>
<dbReference type="PROSITE" id="PS51977">
    <property type="entry name" value="WGR"/>
    <property type="match status" value="1"/>
</dbReference>
<dbReference type="PROSITE" id="PS00347">
    <property type="entry name" value="ZF_PARP_1"/>
    <property type="match status" value="2"/>
</dbReference>
<dbReference type="PROSITE" id="PS50064">
    <property type="entry name" value="ZF_PARP_2"/>
    <property type="match status" value="2"/>
</dbReference>
<sequence length="1013" mass="113100">MAEASERLYRVQYAKSGRASCKKCSESIPKDSLRMAIMVQSPMFDGKVPHWYHFSCFWKVGQSIRHPDVEVDGFSELRWDDQQKVKKTAEAGGVAGKGQDGSGGKAEKTLGDFAAEYAKSNRSMCKGCLEKIEKGQMRLSKKMVDPEKPQLGMIDRWYHPTCFVKKRDELGFRPEYSASQLKGFSLLSAEDKEALKKQLPAIKNEGKRKGDEVDGTDEVAKKKSRKETDKYSKLEKALKAQNELIWNIKDELKKACSTNDLKELLIFNQQQVPSGESAILDRVADGMAFGALLPCKECSGQLVFKSDAYYCTGDVTAWTKCMVKTQNPSRKEWVTPKEFREISYLKKLKVKKQDRIFPPESSAPITVHWPLSVTSAPTAVNSSAPADKPLSNMKILTLGKLSQNKDEAKAVIEKLGGKLTGSANKASLCISIKKEVEKMNKKMEEVKEANIRVVSEDFLQDVSASTKSLQDLLSAHSLSPWGAEVKAEPGEVVAPRGKSAAPSKKSKGCFKEEGVNKSEKRMKLTLKGGAAVDPDSGLEHSAHVLEKGGKVFSATLGLVDIVKGTNSYYKLQLLEDDKESRYWIFRSWGRLGTVIGSNKLEQMPSKEEAVEQFMKLYEEKTGNAWHSKNFTKYPKKFYPLEIDYGQDEEAVKKLTVKPGTKSKLPKPVQELVGMIFDVDSMKKALVEYEIDLQKMPLGKLSRRQIQAAYSILSEVQQPVSQGSSESQILDLSNRFYTLIPHDFGMKKPPLLNNADSVQAKVEMLDNLLDIEVAYSLLRGGSDDSSKDPIDVNYEKLKTDIKVVDRDSEEAEVIRKYVKNTHATTHNAYDLEVIDIFKIEREGESQRYKPFRQLHNRRLLWHGSRTTNFAGILSQGLRIAPPEAPVTGYMFGKGIYFADMVSKSANYCHTSQGDPIGLIMLGEVALGNMYELKHASHISKLPKGKHSVKGLGKTTPDPSASITLEGVEVPLGTGIPSGVNDTALLYNEYIVYDIAQVNLKYLLKLKFNFKTSLW</sequence>
<comment type="function">
    <text evidence="1 13 17 20 22 23 26 28 29">Poly-ADP-ribosyltransferase that mediates poly-ADP-ribosylation of proteins and plays a key role in DNA repair (PubMed:21680843). Mediates glutamate, aspartate, serine, histidine or tyrosine ADP-ribosylation of proteins: the ADP-D-ribosyl group of NAD(+) is transferred to the acceptor carboxyl group of target residues and further ADP-ribosyl groups are transferred to the 2'-position of the terminal adenosine moiety, building up a polymer with an average chain length of 20-30 units (By similarity). Serine ADP-ribosylation of proteins constitutes the primary form of ADP-ribosylation of proteins in response to DNA damage (By similarity). Specificity for the different amino acids is conferred by interacting factors, such as HPF1 and NMNAT1 (PubMed:32822587). Following interaction with HPF1, catalyzes serine ADP-ribosylation of target proteins; HPF1 confers serine specificity by completing the PARP1 active site (By similarity). Also catalyzes tyrosine ADP-ribosylation of target proteins following interaction with HPF1 (By similarity). Following interaction with NMNAT1, catalyzes glutamate and aspartate ADP-ribosylation of target proteins; NMNAT1 confers glutamate and aspartate specificity (PubMed:32822587). PARP1 initiates the repair of DNA breaks: recognizes and binds DNA breaks within chromatin and recruits HPF1, licensing serine ADP-ribosylation of target proteins, such as histones (H2BS6ADPr and H3S10ADPr), thereby promoting decompaction of chromatin and the recruitment of repair factors leading to the reparation of DNA strand breaks (By similarity). HPF1 initiates serine ADP-ribosylation but restricts the polymerase activity of PARP1 in order to limit the length of poly-ADP-ribose chains (By similarity). In addition to base excision repair (BER) pathway, also involved in double-strand breaks (DSBs) repair: together with TIMELESS, accumulates at DNA damage sites and promotes homologous recombination repair by mediating poly-ADP-ribosylation (By similarity). Mediates the poly-ADP-ribosylation of a number of proteins, including itself, APLF, CHFR and NFAT5 (By similarity). In addition to proteins, also able to ADP-ribosylate DNA: catalyzes ADP-ribosylation of DNA strand break termini containing terminal phosphates and a 2'-OH group in single- and double-stranded DNA, respectively (By similarity). Required for PARP9 and DTX3L recruitment to DNA damage sites (By similarity). PARP1-dependent PARP9-DTX3L-mediated ubiquitination promotes the rapid and specific recruitment of 53BP1/TP53BP1, UIMC1/RAP80, and BRCA1 to DNA damage sites (By similarity). PARP1-mediated DNA repair in neurons plays a role in sleep: senses DNA damage in neurons and promotes sleep, facilitating efficient DNA repair (PubMed:34798058). In addition to DNA repair, also involved in other processes, such as transcription regulation, programmed cell death, membrane repair, adipogenesis and innate immunity (PubMed:32822587, PubMed:35460603). Acts as a repressor of transcription: binds to nucleosomes and modulates chromatin structure in a manner similar to histone H1, thereby altering RNA polymerase II (PubMed:22464733). Acts both as a positive and negative regulator of transcription elongation, depending on the context (By similarity). Acts as a positive regulator of transcription elongation by mediating poly-ADP-ribosylation of NELFE, preventing RNA-binding activity of NELFE and relieving transcription pausing (By similarity). Acts as a negative regulator of transcription elongation in response to DNA damage by catalyzing poly-ADP-ribosylation of CCNT1, disrupting the phase separation activity of CCNT1 and subsequent activation of CDK9 (By similarity). Involved in replication fork progression following interaction with CARM1: mediates poly-ADP-ribosylation at replication forks, slowing fork progression (By similarity). Poly-ADP-ribose chains generated by PARP1 also play a role in poly-ADP-ribose-dependent cell death, a process named parthanatos (PubMed:12114629, PubMed:17116882, PubMed:21467298). Also acts as a negative regulator of the cGAS-STING pathway (PubMed:35460603). Acts by mediating poly-ADP-ribosylation of CGAS: PARP1 translocates into the cytosol following phosphorylation by PRKDC and catalyzes poly-ADP-ribosylation and inactivation of CGAS (PubMed:35460603). Acts as a negative regulator of adipogenesis: catalyzes poly-ADP-ribosylation of histone H2B on 'Glu-35' (H2BE35ADPr) following interaction with NMNAT1, inhibiting phosphorylation of H2B at 'Ser-36' (H2BS36ph), thereby blocking expression of pro-adipogenetic genes (PubMed:32822587). Involved in the synthesis of ATP in the nucleus, together with NMNAT1, PARG and NUDT5 (By similarity). Nuclear ATP generation is required for extensive chromatin remodeling events that are energy-consuming (By similarity).</text>
</comment>
<comment type="function">
    <molecule>Poly [ADP-ribose] polymerase 1, processed C-terminus</molecule>
    <text evidence="1">Promotes AIFM1-mediated apoptosis. This form, which translocates into the cytoplasm following cleavage by caspase-3 (CASP3) and caspase-7 (CASP7) in response to apoptosis, is auto-poly-ADP-ribosylated and serves as a poly-ADP-ribose carrier to induce AIFM1-mediated apoptosis.</text>
</comment>
<comment type="function">
    <molecule>Poly [ADP-ribose] polymerase 1, processed N-terminus</molecule>
    <text evidence="1">This cleavage form irreversibly binds to DNA breaks and interferes with DNA repair, promoting DNA damage-induced apoptosis.</text>
</comment>
<comment type="catalytic activity">
    <reaction evidence="1">
        <text>NAD(+) + (ADP-D-ribosyl)n-acceptor = nicotinamide + (ADP-D-ribosyl)n+1-acceptor + H(+).</text>
        <dbReference type="EC" id="2.4.2.30"/>
    </reaction>
</comment>
<comment type="catalytic activity">
    <reaction evidence="1">
        <text>L-seryl-[protein] + NAD(+) = O-(ADP-D-ribosyl)-L-seryl-[protein] + nicotinamide + H(+)</text>
        <dbReference type="Rhea" id="RHEA:58232"/>
        <dbReference type="Rhea" id="RHEA-COMP:9863"/>
        <dbReference type="Rhea" id="RHEA-COMP:15091"/>
        <dbReference type="ChEBI" id="CHEBI:15378"/>
        <dbReference type="ChEBI" id="CHEBI:17154"/>
        <dbReference type="ChEBI" id="CHEBI:29999"/>
        <dbReference type="ChEBI" id="CHEBI:57540"/>
        <dbReference type="ChEBI" id="CHEBI:142556"/>
    </reaction>
    <physiologicalReaction direction="left-to-right" evidence="1">
        <dbReference type="Rhea" id="RHEA:58233"/>
    </physiologicalReaction>
</comment>
<comment type="catalytic activity">
    <reaction evidence="26">
        <text>L-aspartyl-[protein] + NAD(+) = 4-O-(ADP-D-ribosyl)-L-aspartyl-[protein] + nicotinamide</text>
        <dbReference type="Rhea" id="RHEA:54424"/>
        <dbReference type="Rhea" id="RHEA-COMP:9867"/>
        <dbReference type="Rhea" id="RHEA-COMP:13832"/>
        <dbReference type="ChEBI" id="CHEBI:17154"/>
        <dbReference type="ChEBI" id="CHEBI:29961"/>
        <dbReference type="ChEBI" id="CHEBI:57540"/>
        <dbReference type="ChEBI" id="CHEBI:138102"/>
    </reaction>
    <physiologicalReaction direction="left-to-right" evidence="26">
        <dbReference type="Rhea" id="RHEA:54425"/>
    </physiologicalReaction>
</comment>
<comment type="catalytic activity">
    <reaction evidence="26">
        <text>L-glutamyl-[protein] + NAD(+) = 5-O-(ADP-D-ribosyl)-L-glutamyl-[protein] + nicotinamide</text>
        <dbReference type="Rhea" id="RHEA:58224"/>
        <dbReference type="Rhea" id="RHEA-COMP:10208"/>
        <dbReference type="Rhea" id="RHEA-COMP:15089"/>
        <dbReference type="ChEBI" id="CHEBI:17154"/>
        <dbReference type="ChEBI" id="CHEBI:29973"/>
        <dbReference type="ChEBI" id="CHEBI:57540"/>
        <dbReference type="ChEBI" id="CHEBI:142540"/>
    </reaction>
    <physiologicalReaction direction="left-to-right" evidence="26">
        <dbReference type="Rhea" id="RHEA:58225"/>
    </physiologicalReaction>
</comment>
<comment type="catalytic activity">
    <reaction evidence="1">
        <text>L-tyrosyl-[protein] + NAD(+) = O-(ADP-D-ribosyl)-L-tyrosyl-[protein] + nicotinamide + H(+)</text>
        <dbReference type="Rhea" id="RHEA:58236"/>
        <dbReference type="Rhea" id="RHEA-COMP:10136"/>
        <dbReference type="Rhea" id="RHEA-COMP:15092"/>
        <dbReference type="ChEBI" id="CHEBI:15378"/>
        <dbReference type="ChEBI" id="CHEBI:17154"/>
        <dbReference type="ChEBI" id="CHEBI:46858"/>
        <dbReference type="ChEBI" id="CHEBI:57540"/>
        <dbReference type="ChEBI" id="CHEBI:142557"/>
    </reaction>
    <physiologicalReaction direction="left-to-right" evidence="1">
        <dbReference type="Rhea" id="RHEA:58237"/>
    </physiologicalReaction>
</comment>
<comment type="catalytic activity">
    <reaction evidence="1">
        <text>L-histidyl-[protein] + NAD(+) = N(tele)-(ADP-D-ribosyl)-L-histidyl-[protein] + nicotinamide + H(+)</text>
        <dbReference type="Rhea" id="RHEA:72071"/>
        <dbReference type="Rhea" id="RHEA-COMP:9745"/>
        <dbReference type="Rhea" id="RHEA-COMP:18085"/>
        <dbReference type="ChEBI" id="CHEBI:15378"/>
        <dbReference type="ChEBI" id="CHEBI:17154"/>
        <dbReference type="ChEBI" id="CHEBI:29979"/>
        <dbReference type="ChEBI" id="CHEBI:57540"/>
        <dbReference type="ChEBI" id="CHEBI:191398"/>
    </reaction>
    <physiologicalReaction direction="left-to-right" evidence="1">
        <dbReference type="Rhea" id="RHEA:72072"/>
    </physiologicalReaction>
</comment>
<comment type="activity regulation">
    <text evidence="1">ADP-ribosyltransferase activity is regulated via an allosteric activation mechanism. In absence of activation signal, PARP1 is autoinhibited by the PARP alpha-helical domain (also named HD region), which prevents effective NAD(+)-binding. Activity is highly stimulated by signals, such as DNA strand breaks. Binding to damaged DNA unfolds the PARP alpha-helical domain, relieving autoinhibition. Poly-ADP-ribosyltransferase activity is tightly regulated and PARP1 is removed from damaged chromatin following initial poly-ADP-ribosylation of chromatin to avoid prolonged residence (trapping) that has cytotoxic consequences. A number of factors (VCP/p97) or post-translational modifications (auto-poly-ADP-ribosylation or ubiquitination) promote PARP1 removal from chromatin.</text>
</comment>
<comment type="subunit">
    <text evidence="1 2 12 15 18 19 21 24 25 26 31">Homodimer; PARP-type zinc-fingers from separate PARP1 molecules form a dimer module that specifically recognizes DNA strand breaks (By similarity). Heterodimer; heterodimerizes with PARP2 (PubMed:11948190). Interacts (via the PARP catalytic domain) with HPF1 (By similarity). Interacts with NMNAT1 (PubMed:32822587). Interacts with nucleosomes; with a preference for nucleosomes containing H2A.X (By similarity). Interacts with APTX (By similarity). Component of a base excision repair (BER) complex, containing at least XRCC1, PARP1, PARP2, POLB and LRIG3 (PubMed:11948190). Interacts with SRY (By similarity). The SWAP complex consists of NPM1, NCL, PARP1 and SWAP70 (PubMed:9642267). Interacts with TIAM2 (PubMed:17320046). Interacts with PARP3; leading to activate PARP1 in absence of DNA (By similarity). Interacts (when poly-ADP-ribosylated) with CHD1L (via macro domain) (By similarity). Interacts with the DNA polymerase alpha catalytic subunit POLA1; this interaction functions as part of the control of replication fork progression (By similarity). Interacts with EEF1A1 and TXK (By similarity). Interacts with RNF4 (PubMed:19779455). Interacts with RNF146 (By similarity). Interacts with ZNF423 (PubMed:14623329). Interacts with APLF (By similarity). Interacts with SNAI1 (via zinc fingers); the interaction requires SNAI1 to be poly-ADP-ribosylated and non-phosphorylated (active) by GSK3B (PubMed:21577210). Interacts (when poly-ADP-ribosylated) with PARP9 (By similarity). Interacts with NR4A3; activates PARP1 by improving acetylation of PARP1 and suppressing the interaction between PARP1 and SIRT1 (By similarity). Interacts (via catalytic domain) with PUM3; the interaction inhibits the poly-ADP-ribosylation activity of PARP1 and the degradation of PARP1 by CASP3 following genotoxic stress. Interacts with ZNF365. Interacts with RRP1B. Interacts with TIMELESS; the interaction is direct. Interacts with CGAS; leading to impede the formation of the PARP1-TIMELESS complex. Interacts with KHDC3L, the interaction is increased following the formation of DNA double-strand breaks (PubMed:25936915). Interacts (when auto-poly-ADP-ribosylated) with XRCC1; leading to inhibit PARP1 ADP-ribosyltransferase activity (By similarity). Interacts with SPINDOC; promoting PARP1 ADP-ribosyltransferase activity (By similarity). Interacts with BANF1; leading to inhibit PARP1 ADP-ribosyltransferase activity in response to oxidative DNA damage (By similarity). Interacts (when sumoylated and ubiquitinated) with VCP/p97; leading to its extraction from chromatin (By similarity). Interacts with YARS1; promoting PARP1 ADP-ribosyltransferase activity (By similarity). Interacts with PACMP micropeptide; Interacts with PACMP micropeptide; interaction (By similarity). Interacts (when poly-ADP-ribosylated) with isoform 1 of MACROH2A1; MACROH2A1 specifically binds to poly-ADP-ribose chains and inhibits PARP1 activity, limiting the consumption of nuclear NAD(+) (PubMed:28991266). Interacts with CARM1; promoting recruitment to replication forks (By similarity). Interacts with RECQL (By similarity). Interacts with ZNF32; the interaction reshapes ZNF432 interacting proteins (By similarity). Interacts with TPRN; TPRN interacts with a number of DNA damage response proteins, is recruited to sites of DNA damage and may play a role in DNA damage repair (By similarity).</text>
</comment>
<comment type="subunit">
    <molecule>Poly [ADP-ribose] polymerase 1, processed C-terminus</molecule>
    <text evidence="1">Interacts (when auto-poly-ADP-ribosylated) with AIFM1.</text>
</comment>
<comment type="interaction">
    <interactant intactId="EBI-642213">
        <id>P11103</id>
    </interactant>
    <interactant intactId="EBI-644534">
        <id>Q9WTL8</id>
        <label>Bmal1</label>
    </interactant>
    <organismsDiffer>false</organismsDiffer>
    <experiments>7</experiments>
</comment>
<comment type="interaction">
    <interactant intactId="EBI-642213">
        <id>P11103</id>
    </interactant>
    <interactant intactId="EBI-1790419">
        <id>P70677</id>
        <label>Casp3</label>
    </interactant>
    <organismsDiffer>false</organismsDiffer>
    <experiments>3</experiments>
</comment>
<comment type="interaction">
    <interactant intactId="EBI-642213">
        <id>P11103</id>
    </interactant>
    <interactant intactId="EBI-5307197">
        <id>P97864</id>
        <label>Casp7</label>
    </interactant>
    <organismsDiffer>false</organismsDiffer>
    <experiments>3</experiments>
</comment>
<comment type="interaction">
    <interactant intactId="EBI-642213">
        <id>P11103</id>
    </interactant>
    <interactant intactId="EBI-302251">
        <id>P70288</id>
        <label>Hdac2</label>
    </interactant>
    <organismsDiffer>false</organismsDiffer>
    <experiments>3</experiments>
</comment>
<comment type="interaction">
    <interactant intactId="EBI-642213">
        <id>P11103</id>
    </interactant>
    <interactant intactId="EBI-1606219">
        <id>P20263</id>
        <label>Pou5f1</label>
    </interactant>
    <organismsDiffer>false</organismsDiffer>
    <experiments>2</experiments>
</comment>
<comment type="interaction">
    <interactant intactId="EBI-642213">
        <id>P11103</id>
    </interactant>
    <interactant intactId="EBI-1210244">
        <id>Q3TKT4</id>
        <label>Smarca4</label>
    </interactant>
    <organismsDiffer>false</organismsDiffer>
    <experiments>2</experiments>
</comment>
<comment type="interaction">
    <interactant intactId="EBI-642213">
        <id>P11103</id>
    </interactant>
    <interactant intactId="EBI-1555770">
        <id>P03087</id>
    </interactant>
    <organismsDiffer>true</organismsDiffer>
    <experiments>2</experiments>
</comment>
<comment type="subcellular location">
    <subcellularLocation>
        <location evidence="1">Chromosome</location>
    </subcellularLocation>
    <subcellularLocation>
        <location evidence="1">Nucleus</location>
    </subcellularLocation>
    <subcellularLocation>
        <location evidence="1">Nucleus</location>
        <location evidence="1">Nucleolus</location>
    </subcellularLocation>
    <subcellularLocation>
        <location evidence="1">Cytoplasm</location>
        <location evidence="1">Cytosol</location>
    </subcellularLocation>
    <text evidence="1">Localizes to sites of DNA damage. Recognizes (via PARP-type zinc-fingers) and binds DNA strand breaks. Also binds normal/undamaged chromatin. Auto poly-ADP-ribosylation promotes dissociation from chromatin (By similarity). Extracted from chromatin by VCP/p97 following sumoylation and ubiquitination (By similarity). Translocates from the nucleus to the cytosol following phosphorylation by PRKDC (By similarity). Recruited to replication forks following interaction with CARM1 (By similarity).</text>
</comment>
<comment type="subcellular location">
    <molecule>Poly [ADP-ribose] polymerase 1, processed N-terminus</molecule>
    <subcellularLocation>
        <location evidence="1">Chromosome</location>
    </subcellularLocation>
    <text evidence="1">Following cleavage by caspase-3 (CASP3) and caspase-7 (CASP7) in response to apoptosis, this cleavage form irreversibly binds to DNA breaks.</text>
</comment>
<comment type="subcellular location">
    <molecule>Poly [ADP-ribose] polymerase 1, processed C-terminus</molecule>
    <subcellularLocation>
        <location evidence="1">Cytoplasm</location>
    </subcellularLocation>
    <text evidence="1">Following cleavage by caspase-3 (CASP3) and caspase-7 (CASP7) in response to apoptosis, translocates into the cytoplasm, where the auto-poly-ADP-ribosylated form serves as a poly-ADP-ribose carrier to induce AIFM1-mediated apoptosis.</text>
</comment>
<comment type="alternative products">
    <event type="alternative initiation"/>
    <isoform>
        <id>P11103-1</id>
        <name>1</name>
        <name>Long</name>
        <sequence type="displayed"/>
    </isoform>
    <isoform>
        <id>P11103-2</id>
        <name>2</name>
        <name evidence="32">Short</name>
        <name evidence="32">sPARP-1</name>
        <sequence type="described" ref="VSP_018970"/>
    </isoform>
</comment>
<comment type="tissue specificity">
    <text evidence="31">Widely expressed (PubMed:9642267). Expression is correlated with proliferation, with higher levels occurring during early fetal development and organogenesis and in the highly proliferative cell compartments of adult (PubMed:9642267). Expressed in B-cells that have been induced to switch to various Ig isotypes (PubMed:9642267).</text>
</comment>
<comment type="developmental stage">
    <text evidence="12">At stage 12.5 dpc, expressed at high level in the developing liver and kidneys (PubMed:11948190). Expressed at higher level in the genital ridge and the spinal ganglia (PubMed:11948190). At 18.5 dpc, preferentially expressed in the thymus and in regions of the nervous system (PubMed:11948190). Within the developing trunk, preferential expression persisted in the liver and became restricted to the cortical region of the kidney, spleen, adrenal gland, and to stomach and intestinal epithelia (PubMed:11948190). From 14.5 dpc to 18.5 dpc, as well as in the adult, expressed at the highest level in thymus (PubMed:11948190). Expression is particularly high in the subcapsular zone of the thymus where immature lymphocytes proliferate (PubMed:11948190). Expressed at high level in the seminiferous tubules of the developing testis (PubMed:11948190).</text>
</comment>
<comment type="domain">
    <text evidence="1">The two PARP-type zinc-fingers (also named Zn1 and Zn2) specifically recognize DNA strand breaks: PARP-type zinc-finger 1 binds PARP-type zinc-finger 2 from a separate PARP1 molecule to form a dimeric module that specifically recognizes DNA strand breaks.</text>
</comment>
<comment type="domain">
    <text evidence="1">The PADR1-type (also named Zn3) zinc-finger mediates an interdomain contact and is required for the ability of PARP1 to regulate chromatin structure.</text>
</comment>
<comment type="domain">
    <text evidence="1">The BRCT domain is able to bind intact DNA without activating the poly-ADP-ribosyltransferase activity. The BRCT domain mediates DNA intrastrand transfer (named 'monkey-bar mechanism') that allows rapid movements of PARP1 through the nucleus.</text>
</comment>
<comment type="domain">
    <text evidence="3">The WGR domain bridges two nucleosomes, with the broken DNA aligned in a position suitable for ligation. The bridging induces structural changes in PARP1 that signal the recognition of a DNA break to the catalytic domain of PARP1, promoting HPF1 recruitment and subsequent activation of PARP1, licensing serine ADP-ribosylation of target proteins.</text>
</comment>
<comment type="domain">
    <text evidence="1">The PARP alpha-helical domain (also named HD region) prevents effective NAD(+)-binding in absence of activation signal. Binding to damaged DNA unfolds the PARP alpha-helical domain, relieving autoinhibition.</text>
</comment>
<comment type="PTM">
    <text evidence="1 22">Poly-ADP-ribosylated on serine, glutamate and aspartate residues by autocatalysis. Auto-ADP-ribosylation on serine takes place following interaction with HPF1. Auto poly-ADP-ribosylation on serine residues promotes its dissociation from chromatin. Poly-ADP-ribosylated by PARP2; poly-ADP-ribosylation mediates the recruitment of CHD1L to DNA damage sites (By similarity). Mono-ADP-ribosylated at Lys-520 by SIRT6 in response to oxidative stress, promoting recruitment to double-strand breaks (DSBs) sites (PubMed:21680843).</text>
</comment>
<comment type="PTM">
    <text evidence="16">S-nitrosylated, leading to inhibit transcription regulation activity.</text>
</comment>
<comment type="PTM">
    <text evidence="1">Phosphorylated at Thr-593 by PRKDC in response to DNA damage following virus infection, promoting its translocation to the cytosol (By similarity). Phosphorylated by TXK (By similarity).</text>
</comment>
<comment type="PTM">
    <text evidence="23">Proteolytically cleaved by caspase-3 (CASP3) and caspase-7 (CASP7) in response to apoptosis to generate the Poly [ADP-ribose] polymerase 1, processed N-terminus and Poly [ADP-ribose] polymerase 1, processed C-terminus forms.</text>
</comment>
<comment type="PTM">
    <text evidence="1">Sumoylated with SUMO1 or SUMO2 by PIAS4 following prolonged residence (trapping) to chromatin. Sumoylation promotes ubiquitination by RNF4 and removal from chromatin by VCP/p97.</text>
</comment>
<comment type="PTM">
    <text evidence="1">Ubiquitinated by RNF4 following sumoylation by PIAS4 in response to prolonged residence (trapping) to chromatin. Ubiquitination promotes removal from chromatin by VCP/p97.</text>
</comment>
<comment type="disruption phenotype">
    <text evidence="14 27 30">Mice show a complete lack of nuclear poly-ADP-ribosylation (PubMed:7578427). Mice are however viable and fertile (PubMed:7578427). Moreover, repair of UV and MNNG induced DNA damage are not affected (PubMed:7578427). However, about 30% of the mutant mice developed pathological skin aberrations on a mixed 129/Sv x C57B1/6 genetic background (PubMed:7578427). Mice lacking both Parp1 and Parp2 are not viable and die at the onset of gastrulation (PubMed:12727891). Female mice lacking both Parp1 and Parp2 in the uterus display infertility; defects are caused by decidualization failure and pregnancy loss (PubMed:34580230).</text>
</comment>
<comment type="similarity">
    <text evidence="10 33">Belongs to the ARTD/PARP family.</text>
</comment>
<evidence type="ECO:0000250" key="1">
    <source>
        <dbReference type="UniProtKB" id="P09874"/>
    </source>
</evidence>
<evidence type="ECO:0000250" key="2">
    <source>
        <dbReference type="UniProtKB" id="P27008"/>
    </source>
</evidence>
<evidence type="ECO:0000250" key="3">
    <source>
        <dbReference type="UniProtKB" id="Q9UGN5"/>
    </source>
</evidence>
<evidence type="ECO:0000255" key="4"/>
<evidence type="ECO:0000255" key="5">
    <source>
        <dbReference type="PROSITE-ProRule" id="PRU00033"/>
    </source>
</evidence>
<evidence type="ECO:0000255" key="6">
    <source>
        <dbReference type="PROSITE-ProRule" id="PRU00264"/>
    </source>
</evidence>
<evidence type="ECO:0000255" key="7">
    <source>
        <dbReference type="PROSITE-ProRule" id="PRU00397"/>
    </source>
</evidence>
<evidence type="ECO:0000255" key="8">
    <source>
        <dbReference type="PROSITE-ProRule" id="PRU00398"/>
    </source>
</evidence>
<evidence type="ECO:0000255" key="9">
    <source>
        <dbReference type="PROSITE-ProRule" id="PRU01321"/>
    </source>
</evidence>
<evidence type="ECO:0000255" key="10">
    <source>
        <dbReference type="PROSITE-ProRule" id="PRU01351"/>
    </source>
</evidence>
<evidence type="ECO:0000256" key="11">
    <source>
        <dbReference type="SAM" id="MobiDB-lite"/>
    </source>
</evidence>
<evidence type="ECO:0000269" key="12">
    <source>
    </source>
</evidence>
<evidence type="ECO:0000269" key="13">
    <source>
    </source>
</evidence>
<evidence type="ECO:0000269" key="14">
    <source>
    </source>
</evidence>
<evidence type="ECO:0000269" key="15">
    <source>
    </source>
</evidence>
<evidence type="ECO:0000269" key="16">
    <source>
    </source>
</evidence>
<evidence type="ECO:0000269" key="17">
    <source>
    </source>
</evidence>
<evidence type="ECO:0000269" key="18">
    <source>
    </source>
</evidence>
<evidence type="ECO:0000269" key="19">
    <source>
    </source>
</evidence>
<evidence type="ECO:0000269" key="20">
    <source>
    </source>
</evidence>
<evidence type="ECO:0000269" key="21">
    <source>
    </source>
</evidence>
<evidence type="ECO:0000269" key="22">
    <source>
    </source>
</evidence>
<evidence type="ECO:0000269" key="23">
    <source>
    </source>
</evidence>
<evidence type="ECO:0000269" key="24">
    <source>
    </source>
</evidence>
<evidence type="ECO:0000269" key="25">
    <source>
    </source>
</evidence>
<evidence type="ECO:0000269" key="26">
    <source>
    </source>
</evidence>
<evidence type="ECO:0000269" key="27">
    <source>
    </source>
</evidence>
<evidence type="ECO:0000269" key="28">
    <source>
    </source>
</evidence>
<evidence type="ECO:0000269" key="29">
    <source>
    </source>
</evidence>
<evidence type="ECO:0000269" key="30">
    <source>
    </source>
</evidence>
<evidence type="ECO:0000269" key="31">
    <source>
    </source>
</evidence>
<evidence type="ECO:0000303" key="32">
    <source>
    </source>
</evidence>
<evidence type="ECO:0000305" key="33"/>
<evidence type="ECO:0007744" key="34">
    <source>
    </source>
</evidence>
<protein>
    <recommendedName>
        <fullName>Poly [ADP-ribose] polymerase 1</fullName>
        <shortName>PARP-1</shortName>
        <ecNumber evidence="1">2.4.2.30</ecNumber>
    </recommendedName>
    <alternativeName>
        <fullName>ADP-ribosyltransferase diphtheria toxin-like 1</fullName>
        <shortName>ARTD1</shortName>
    </alternativeName>
    <alternativeName>
        <fullName evidence="33">DNA ADP-ribosyltransferase PARP1</fullName>
        <ecNumber evidence="1">2.4.2.-</ecNumber>
    </alternativeName>
    <alternativeName>
        <fullName>NAD(+) ADP-ribosyltransferase 1</fullName>
        <shortName>ADPRT 1</shortName>
    </alternativeName>
    <alternativeName>
        <fullName>Poly[ADP-ribose] synthase 1</fullName>
        <shortName>msPARP</shortName>
    </alternativeName>
    <alternativeName>
        <fullName evidence="33">Protein poly-ADP-ribosyltransferase PARP1</fullName>
        <ecNumber evidence="26">2.4.2.-</ecNumber>
    </alternativeName>
    <component>
        <recommendedName>
            <fullName evidence="1">Poly [ADP-ribose] polymerase 1, processed C-terminus</fullName>
        </recommendedName>
        <alternativeName>
            <fullName evidence="1">Poly [ADP-ribose] polymerase 1, 89-kDa form</fullName>
        </alternativeName>
    </component>
    <component>
        <recommendedName>
            <fullName evidence="1">Poly [ADP-ribose] polymerase 1, processed N-terminus</fullName>
        </recommendedName>
        <alternativeName>
            <fullName evidence="1">Poly [ADP-ribose] polymerase 1, 24-kDa form</fullName>
        </alternativeName>
    </component>
</protein>
<proteinExistence type="evidence at protein level"/>